<gene>
    <name type="primary">PRNP</name>
    <name type="synonym">PRP</name>
</gene>
<evidence type="ECO:0000250" key="1"/>
<evidence type="ECO:0000250" key="2">
    <source>
        <dbReference type="UniProtKB" id="P04156"/>
    </source>
</evidence>
<evidence type="ECO:0000250" key="3">
    <source>
        <dbReference type="UniProtKB" id="P04273"/>
    </source>
</evidence>
<evidence type="ECO:0000250" key="4">
    <source>
        <dbReference type="UniProtKB" id="P04925"/>
    </source>
</evidence>
<evidence type="ECO:0000255" key="5"/>
<evidence type="ECO:0000256" key="6">
    <source>
        <dbReference type="SAM" id="MobiDB-lite"/>
    </source>
</evidence>
<evidence type="ECO:0000305" key="7"/>
<protein>
    <recommendedName>
        <fullName>Major prion protein</fullName>
        <shortName>PrP</shortName>
    </recommendedName>
    <alternativeName>
        <fullName>PrP27-30</fullName>
    </alternativeName>
    <alternativeName>
        <fullName>PrP33-35C</fullName>
    </alternativeName>
    <cdAntigenName>CD230</cdAntigenName>
</protein>
<comment type="function">
    <text evidence="2 4">Its primary physiological function is unclear. Has cytoprotective activity against internal or environmental stresses. May play a role in neuronal development and synaptic plasticity. May be required for neuronal myelin sheath maintenance. May play a role in iron uptake and iron homeostasis. Soluble oligomers are toxic to cultured neuroblastoma cells and induce apoptosis (in vitro). Association with GPC1 (via its heparan sulfate chains) targets PRNP to lipid rafts. Also provides Cu(2+) or Zn(2+) for the ascorbate-mediated GPC1 deaminase degradation of its heparan sulfate side chains (By similarity).</text>
</comment>
<comment type="subunit">
    <text evidence="2 4">Monomer and homodimer. Has a tendency to aggregate into amyloid fibrils containing a cross-beta spine, formed by a steric zipper of superposed beta-strands. Soluble oligomers may represent an intermediate stage on the path to fibril formation. Copper binding may promote oligomerization. Interacts with GRB2, APP, ERI3/PRNPIP and SYN1. Mislocalized cytosolically exposed PrP interacts with MGRN1; this interaction alters MGRN1 subcellular location and causes lysosomal enlargement. Interacts with KIAA1191.</text>
</comment>
<comment type="subcellular location">
    <subcellularLocation>
        <location evidence="2">Cell membrane</location>
        <topology evidence="2">Lipid-anchor</topology>
        <topology evidence="2">GPI-anchor</topology>
    </subcellularLocation>
    <subcellularLocation>
        <location evidence="4">Golgi apparatus</location>
    </subcellularLocation>
    <text evidence="2">Targeted to lipid rafts via association with the heparan sulfate chains of GPC1. Colocates, in the presence of Cu(2+), to vesicles in para- and perinuclear regions, where both proteins undergo internalization. Heparin displaces PRNP from lipid rafts and promotes endocytosis.</text>
</comment>
<comment type="domain">
    <text evidence="2">The normal, monomeric form has a mainly alpha-helical structure. The disease-associated, protease-resistant form forms amyloid fibrils containing a cross-beta spine, formed by a steric zipper of superposed beta-strands. Disease mutations may favor intermolecular contacts via short beta strands, and may thereby trigger oligomerization.</text>
</comment>
<comment type="domain">
    <text evidence="2">Contains an N-terminal region composed of octamer repeats. At low copper concentrations, the sidechains of His residues from three or four repeats contribute to the binding of a single copper ion. Alternatively, a copper ion can be bound by interaction with the sidechain and backbone amide nitrogen of a single His residue. The observed copper binding stoichiometry suggests that two repeat regions cooperate to stabilize the binding of a single copper ion. At higher copper concentrations, each octamer can bind one copper ion by interactions with the His sidechain and Gly backbone atoms. A mixture of binding types may occur, especially in the case of octamer repeat expansion. Copper binding may stabilize the conformation of this region and may promote oligomerization.</text>
</comment>
<comment type="disease">
    <text evidence="7">PrP is found in high quantity in the brain of humans and animals infected with the degenerative neurological diseases kuru, Creutzfeldt-Jakob disease (CJD), Gerstmann-Straussler syndrome (GSS), scrapie, bovine spongiform encephalopathy (BSE), transmissible mink encephalopathy (TME), etc.</text>
</comment>
<comment type="similarity">
    <text evidence="7">Belongs to the prion family.</text>
</comment>
<feature type="signal peptide" evidence="1">
    <location>
        <begin position="1" status="less than"/>
        <end position="15"/>
    </location>
</feature>
<feature type="chain" id="PRO_0000025691" description="Major prion protein">
    <location>
        <begin position="16"/>
        <end position="215"/>
    </location>
</feature>
<feature type="propeptide" id="PRO_0000025692" description="Removed in mature form" evidence="1">
    <location>
        <begin position="216"/>
        <end position="238"/>
    </location>
</feature>
<feature type="repeat" description="1">
    <location>
        <begin position="44"/>
        <end position="52"/>
    </location>
</feature>
<feature type="repeat" description="2">
    <location>
        <begin position="53"/>
        <end position="60"/>
    </location>
</feature>
<feature type="repeat" description="3">
    <location>
        <begin position="61"/>
        <end position="68"/>
    </location>
</feature>
<feature type="repeat" description="4">
    <location>
        <begin position="69"/>
        <end position="76"/>
    </location>
</feature>
<feature type="region of interest" description="Interaction with GRB2, ERI3 and SYN1" evidence="4">
    <location>
        <begin position="16"/>
        <end position="215"/>
    </location>
</feature>
<feature type="region of interest" description="Disordered" evidence="6">
    <location>
        <begin position="18"/>
        <end position="93"/>
    </location>
</feature>
<feature type="region of interest" description="4 X 8 AA tandem repeats of P-H-G-G-G-W-G-Q">
    <location>
        <begin position="44"/>
        <end position="76"/>
    </location>
</feature>
<feature type="compositionally biased region" description="Gly residues" evidence="6">
    <location>
        <begin position="45"/>
        <end position="80"/>
    </location>
</feature>
<feature type="compositionally biased region" description="Basic residues" evidence="6">
    <location>
        <begin position="83"/>
        <end position="93"/>
    </location>
</feature>
<feature type="binding site" evidence="2">
    <location>
        <position position="47"/>
    </location>
    <ligand>
        <name>Cu(2+)</name>
        <dbReference type="ChEBI" id="CHEBI:29036"/>
        <label>1</label>
    </ligand>
</feature>
<feature type="binding site" evidence="2">
    <location>
        <position position="48"/>
    </location>
    <ligand>
        <name>Cu(2+)</name>
        <dbReference type="ChEBI" id="CHEBI:29036"/>
        <label>1</label>
    </ligand>
</feature>
<feature type="binding site" evidence="2">
    <location>
        <position position="54"/>
    </location>
    <ligand>
        <name>Cu(2+)</name>
        <dbReference type="ChEBI" id="CHEBI:29036"/>
        <label>2</label>
    </ligand>
</feature>
<feature type="binding site" evidence="2">
    <location>
        <position position="55"/>
    </location>
    <ligand>
        <name>Cu(2+)</name>
        <dbReference type="ChEBI" id="CHEBI:29036"/>
        <label>2</label>
    </ligand>
</feature>
<feature type="binding site" evidence="2">
    <location>
        <position position="56"/>
    </location>
    <ligand>
        <name>Cu(2+)</name>
        <dbReference type="ChEBI" id="CHEBI:29036"/>
        <label>2</label>
    </ligand>
</feature>
<feature type="binding site" evidence="2">
    <location>
        <position position="62"/>
    </location>
    <ligand>
        <name>Cu(2+)</name>
        <dbReference type="ChEBI" id="CHEBI:29036"/>
        <label>3</label>
    </ligand>
</feature>
<feature type="binding site" evidence="2">
    <location>
        <position position="63"/>
    </location>
    <ligand>
        <name>Cu(2+)</name>
        <dbReference type="ChEBI" id="CHEBI:29036"/>
        <label>3</label>
    </ligand>
</feature>
<feature type="binding site" evidence="2">
    <location>
        <position position="64"/>
    </location>
    <ligand>
        <name>Cu(2+)</name>
        <dbReference type="ChEBI" id="CHEBI:29036"/>
        <label>3</label>
    </ligand>
</feature>
<feature type="binding site" evidence="2">
    <location>
        <position position="70"/>
    </location>
    <ligand>
        <name>Cu(2+)</name>
        <dbReference type="ChEBI" id="CHEBI:29036"/>
        <label>4</label>
    </ligand>
</feature>
<feature type="binding site" evidence="2">
    <location>
        <position position="71"/>
    </location>
    <ligand>
        <name>Cu(2+)</name>
        <dbReference type="ChEBI" id="CHEBI:29036"/>
        <label>4</label>
    </ligand>
</feature>
<feature type="binding site" evidence="2">
    <location>
        <position position="72"/>
    </location>
    <ligand>
        <name>Cu(2+)</name>
        <dbReference type="ChEBI" id="CHEBI:29036"/>
        <label>4</label>
    </ligand>
</feature>
<feature type="lipid moiety-binding region" description="GPI-anchor amidated serine" evidence="3">
    <location>
        <position position="215"/>
    </location>
</feature>
<feature type="glycosylation site" description="N-linked (GlcNAc...) asparagine" evidence="5">
    <location>
        <position position="166"/>
    </location>
</feature>
<feature type="glycosylation site" description="N-linked (GlcNAc...) asparagine" evidence="5">
    <location>
        <position position="182"/>
    </location>
</feature>
<feature type="disulfide bond" evidence="3">
    <location>
        <begin position="164"/>
        <end position="199"/>
    </location>
</feature>
<feature type="non-terminal residue">
    <location>
        <position position="1"/>
    </location>
</feature>
<accession>P67991</accession>
<accession>Q95145</accession>
<accession>Q95200</accession>
<reference key="1">
    <citation type="submission" date="1996-11" db="EMBL/GenBank/DDBJ databases">
        <title>Evidence for an increased substitution rate of the hominoid prion protein gene during the period of brain expansion.</title>
        <authorList>
            <person name="van der Kuyl A.C."/>
            <person name="Dekker J.T."/>
            <person name="Goudsmit J."/>
        </authorList>
    </citation>
    <scope>NUCLEOTIDE SEQUENCE [GENOMIC DNA]</scope>
</reference>
<proteinExistence type="inferred from homology"/>
<organism>
    <name type="scientific">Macaca sylvanus</name>
    <name type="common">Barbary macaque</name>
    <dbReference type="NCBI Taxonomy" id="9546"/>
    <lineage>
        <taxon>Eukaryota</taxon>
        <taxon>Metazoa</taxon>
        <taxon>Chordata</taxon>
        <taxon>Craniata</taxon>
        <taxon>Vertebrata</taxon>
        <taxon>Euteleostomi</taxon>
        <taxon>Mammalia</taxon>
        <taxon>Eutheria</taxon>
        <taxon>Euarchontoglires</taxon>
        <taxon>Primates</taxon>
        <taxon>Haplorrhini</taxon>
        <taxon>Catarrhini</taxon>
        <taxon>Cercopithecidae</taxon>
        <taxon>Cercopithecinae</taxon>
        <taxon>Macaca</taxon>
    </lineage>
</organism>
<name>PRIO_MACSY</name>
<keyword id="KW-0034">Amyloid</keyword>
<keyword id="KW-1003">Cell membrane</keyword>
<keyword id="KW-0186">Copper</keyword>
<keyword id="KW-1015">Disulfide bond</keyword>
<keyword id="KW-0325">Glycoprotein</keyword>
<keyword id="KW-0333">Golgi apparatus</keyword>
<keyword id="KW-0336">GPI-anchor</keyword>
<keyword id="KW-0449">Lipoprotein</keyword>
<keyword id="KW-0472">Membrane</keyword>
<keyword id="KW-0479">Metal-binding</keyword>
<keyword id="KW-0640">Prion</keyword>
<keyword id="KW-0677">Repeat</keyword>
<keyword id="KW-0732">Signal</keyword>
<keyword id="KW-0862">Zinc</keyword>
<dbReference type="EMBL" id="U75382">
    <property type="protein sequence ID" value="AAB50629.1"/>
    <property type="molecule type" value="Genomic_DNA"/>
</dbReference>
<dbReference type="SMR" id="P67991"/>
<dbReference type="GlyCosmos" id="P67991">
    <property type="glycosylation" value="2 sites, No reported glycans"/>
</dbReference>
<dbReference type="GO" id="GO:0005794">
    <property type="term" value="C:Golgi apparatus"/>
    <property type="evidence" value="ECO:0007669"/>
    <property type="project" value="UniProtKB-SubCell"/>
</dbReference>
<dbReference type="GO" id="GO:0005886">
    <property type="term" value="C:plasma membrane"/>
    <property type="evidence" value="ECO:0007669"/>
    <property type="project" value="UniProtKB-SubCell"/>
</dbReference>
<dbReference type="GO" id="GO:0098552">
    <property type="term" value="C:side of membrane"/>
    <property type="evidence" value="ECO:0007669"/>
    <property type="project" value="UniProtKB-KW"/>
</dbReference>
<dbReference type="GO" id="GO:0005507">
    <property type="term" value="F:copper ion binding"/>
    <property type="evidence" value="ECO:0000250"/>
    <property type="project" value="UniProtKB"/>
</dbReference>
<dbReference type="GO" id="GO:0051260">
    <property type="term" value="P:protein homooligomerization"/>
    <property type="evidence" value="ECO:0007669"/>
    <property type="project" value="InterPro"/>
</dbReference>
<dbReference type="FunFam" id="1.10.790.10:FF:000001">
    <property type="entry name" value="Major prion protein"/>
    <property type="match status" value="1"/>
</dbReference>
<dbReference type="Gene3D" id="1.10.790.10">
    <property type="entry name" value="Prion/Doppel protein, beta-ribbon domain"/>
    <property type="match status" value="1"/>
</dbReference>
<dbReference type="InterPro" id="IPR000817">
    <property type="entry name" value="Prion"/>
</dbReference>
<dbReference type="InterPro" id="IPR036924">
    <property type="entry name" value="Prion/Doppel_b-ribbon_dom_sf"/>
</dbReference>
<dbReference type="InterPro" id="IPR022416">
    <property type="entry name" value="Prion/Doppel_prot_b-ribbon_dom"/>
</dbReference>
<dbReference type="InterPro" id="IPR020949">
    <property type="entry name" value="Prion_copper_b_octapeptide"/>
</dbReference>
<dbReference type="InterPro" id="IPR025860">
    <property type="entry name" value="Prion_N"/>
</dbReference>
<dbReference type="PANTHER" id="PTHR15506">
    <property type="entry name" value="DOPPEL PRION"/>
    <property type="match status" value="1"/>
</dbReference>
<dbReference type="PANTHER" id="PTHR15506:SF2">
    <property type="entry name" value="MAJOR PRION PROTEIN"/>
    <property type="match status" value="1"/>
</dbReference>
<dbReference type="Pfam" id="PF00377">
    <property type="entry name" value="Prion"/>
    <property type="match status" value="1"/>
</dbReference>
<dbReference type="Pfam" id="PF11587">
    <property type="entry name" value="Prion_bPrPp"/>
    <property type="match status" value="1"/>
</dbReference>
<dbReference type="Pfam" id="PF03991">
    <property type="entry name" value="Prion_octapep"/>
    <property type="match status" value="1"/>
</dbReference>
<dbReference type="PRINTS" id="PR00341">
    <property type="entry name" value="PRION"/>
</dbReference>
<dbReference type="SMART" id="SM00157">
    <property type="entry name" value="PRP"/>
    <property type="match status" value="1"/>
</dbReference>
<dbReference type="SUPFAM" id="SSF54098">
    <property type="entry name" value="Prion-like"/>
    <property type="match status" value="1"/>
</dbReference>
<dbReference type="PROSITE" id="PS00291">
    <property type="entry name" value="PRION_1"/>
    <property type="match status" value="1"/>
</dbReference>
<dbReference type="PROSITE" id="PS00706">
    <property type="entry name" value="PRION_2"/>
    <property type="match status" value="1"/>
</dbReference>
<sequence length="238" mass="26123">MLVLFVATWSDLGLCKKRPKPGGWNTGGSRYPGQGSPGGNRYPPQGGGGWGQPHGGGWGQPHGGGWGQPHGGGWGQGGGTHNQWHKPSKPKTSMKHMAGAAAAGAVVGGLGGYMLGSAMSRPLIHFGNDYEDRYYRENMYRYPNQVYYRPVDQYSNQNNFVHDCVNITIKQHTVTTTTKGENFTETDVKMMERVVEQMCITQYEKESQAYYQRGSSMVLFSSPPVILLISFLIFLIVG</sequence>